<comment type="function">
    <text evidence="2 5 6 7">Proton-activated proton channel that catalyzes proton efflux from endosomes and lysosomes to maintain a steady-state pH (PubMed:35750034). Activated at low pH (under pH 4.6) by luminal side protons: selectively mediates lysosomal proton release from lysosomes, eliciting a proton leak that balances V-ATPase activity to maintain pH homeostasis (By similarity). Regulation of lumenal pH stability is required for autophagosome-lysosome fusion (PubMed:26317472). Also acts as a potassium channel at higher pH, regulating potassium conductance in endosomes and lysosomes (PubMed:26317472, PubMed:33505021). Constitutes the pore-forming subunit of the lysoK(GF) complex, a complex activated by extracellular growth factors (PubMed:33505021). The lysoK(GF) complex is composed of TMEM175 and AKT (AKT1, AKT2 or AKT3), a major target of growth factor receptors: in the complex, TMEM175 channel is opened by conformational changes by AKT, leading to its activation (PubMed:33505021). The lysoK(GF) complex is required to protect neurons against stress-induced damage (PubMed:33505021).</text>
</comment>
<comment type="catalytic activity">
    <reaction evidence="2">
        <text>H(+)(in) = H(+)(out)</text>
        <dbReference type="Rhea" id="RHEA:34979"/>
        <dbReference type="ChEBI" id="CHEBI:15378"/>
    </reaction>
</comment>
<comment type="catalytic activity">
    <reaction evidence="5">
        <text>K(+)(in) = K(+)(out)</text>
        <dbReference type="Rhea" id="RHEA:29463"/>
        <dbReference type="ChEBI" id="CHEBI:29103"/>
    </reaction>
</comment>
<comment type="activity regulation">
    <text evidence="2 6">Active at low pH (under pH 4.6): proton channel activity is activated by luminal side protons (By similarity). Polyunsaturated fatty acids, such as arachidonic acid, also activate the channel activity (By similarity). Proton channel activity is directly inhibited by LAMP1 or LAMP2, facilitating lysosomal acidification (By similarity). Channel activity is activated following interaction with AKT (AKT1, AKT2 or AKT3): interaction promotes activation from closed to an open state (PubMed:33505021). Activation by AKT is independent of AKT serine/threonine-protein kinase activity (PubMed:33505021).</text>
</comment>
<comment type="subunit">
    <text evidence="2 6">Homodimer (By similarity). Interacts with AKT (AKT1, AKT2 or AKT3); leading to formation of the lysoK(GF) complex, which activates the channel (PubMed:33505021). Interacts with LAMP1; inhibiting the proton channel activity of TMEM175 (By similarity). Interacts with LAMP2; inhibiting the proton channel activity of TMEM175 (By similarity).</text>
</comment>
<comment type="subcellular location">
    <subcellularLocation>
        <location evidence="2">Endosome membrane</location>
        <topology evidence="3">Multi-pass membrane protein</topology>
    </subcellularLocation>
    <subcellularLocation>
        <location evidence="2">Lysosome membrane</location>
        <topology evidence="3">Multi-pass membrane protein</topology>
    </subcellularLocation>
</comment>
<comment type="domain">
    <text evidence="2">Composed of two modules of six transmembranes, forming a homodimer with a tetrameric architecture. The six transmembrane regions of each module are tightly packed within each subunit without undergoing domain swapping. Forms a central ion-conduction pore lined by the side chains of the pore-lining helices. Conserved isoleucine residues (Ile-43 in the first module and Ile-268 in the second module) in the center of the pore serve as the gate in the closed conformation. In the widened channel in the open conformation, the same residues establish a constriction essential for potassium selectivity.</text>
</comment>
<comment type="disruption phenotype">
    <text evidence="6 7">Mice display accelerated loss of dopaminergic neurons and impaired motor skills (PubMed:33505021). Knockout neurons show increased damage in response to insults and an accumulation of alpha-synuclein (PubMed:33505021, PubMed:35750034). The accumulation of alpha-synuclein leads to increased damage to the integrity of lysosomal membranes (PubMed:33505021, PubMed:35750034).</text>
</comment>
<comment type="similarity">
    <text evidence="9">Belongs to the TMEM175 family.</text>
</comment>
<dbReference type="EMBL" id="AK013879">
    <property type="protein sequence ID" value="BAB29031.1"/>
    <property type="molecule type" value="mRNA"/>
</dbReference>
<dbReference type="EMBL" id="AK170273">
    <property type="protein sequence ID" value="BAE41678.1"/>
    <property type="molecule type" value="mRNA"/>
</dbReference>
<dbReference type="EMBL" id="BC005542">
    <property type="protein sequence ID" value="AAH05542.1"/>
    <property type="molecule type" value="mRNA"/>
</dbReference>
<dbReference type="CCDS" id="CCDS19514.1"/>
<dbReference type="RefSeq" id="NP_001157004.1">
    <property type="nucleotide sequence ID" value="NM_001163532.1"/>
</dbReference>
<dbReference type="RefSeq" id="NP_001346352.1">
    <property type="nucleotide sequence ID" value="NM_001359423.1"/>
</dbReference>
<dbReference type="RefSeq" id="NP_082499.3">
    <property type="nucleotide sequence ID" value="NM_028223.3"/>
</dbReference>
<dbReference type="RefSeq" id="XP_006535292.1">
    <property type="nucleotide sequence ID" value="XM_006535229.2"/>
</dbReference>
<dbReference type="RefSeq" id="XP_006535293.1">
    <property type="nucleotide sequence ID" value="XM_006535230.5"/>
</dbReference>
<dbReference type="RefSeq" id="XP_036021416.1">
    <property type="nucleotide sequence ID" value="XM_036165523.1"/>
</dbReference>
<dbReference type="SMR" id="Q9CXY1"/>
<dbReference type="FunCoup" id="Q9CXY1">
    <property type="interactions" value="1904"/>
</dbReference>
<dbReference type="STRING" id="10090.ENSMUSP00000068607"/>
<dbReference type="iPTMnet" id="Q9CXY1"/>
<dbReference type="PhosphoSitePlus" id="Q9CXY1"/>
<dbReference type="SwissPalm" id="Q9CXY1"/>
<dbReference type="PaxDb" id="10090-ENSMUSP00000068607"/>
<dbReference type="ProteomicsDB" id="259540"/>
<dbReference type="Pumba" id="Q9CXY1"/>
<dbReference type="Antibodypedia" id="8167">
    <property type="antibodies" value="61 antibodies from 20 providers"/>
</dbReference>
<dbReference type="DNASU" id="72392"/>
<dbReference type="Ensembl" id="ENSMUST00000063272.13">
    <property type="protein sequence ID" value="ENSMUSP00000068607.7"/>
    <property type="gene ID" value="ENSMUSG00000013495.16"/>
</dbReference>
<dbReference type="Ensembl" id="ENSMUST00000078323.13">
    <property type="protein sequence ID" value="ENSMUSP00000077437.7"/>
    <property type="gene ID" value="ENSMUSG00000013495.16"/>
</dbReference>
<dbReference type="Ensembl" id="ENSMUST00000120327.3">
    <property type="protein sequence ID" value="ENSMUSP00000112780.2"/>
    <property type="gene ID" value="ENSMUSG00000013495.16"/>
</dbReference>
<dbReference type="GeneID" id="72392"/>
<dbReference type="KEGG" id="mmu:72392"/>
<dbReference type="UCSC" id="uc008yoq.2">
    <property type="organism name" value="mouse"/>
</dbReference>
<dbReference type="AGR" id="MGI:1919642"/>
<dbReference type="CTD" id="84286"/>
<dbReference type="MGI" id="MGI:1919642">
    <property type="gene designation" value="Tmem175"/>
</dbReference>
<dbReference type="VEuPathDB" id="HostDB:ENSMUSG00000013495"/>
<dbReference type="eggNOG" id="ENOG502QR5C">
    <property type="taxonomic scope" value="Eukaryota"/>
</dbReference>
<dbReference type="GeneTree" id="ENSGT00390000015667"/>
<dbReference type="HOGENOM" id="CLU_052593_0_0_1"/>
<dbReference type="InParanoid" id="Q9CXY1"/>
<dbReference type="OMA" id="FFFPVSY"/>
<dbReference type="OrthoDB" id="203835at2759"/>
<dbReference type="PhylomeDB" id="Q9CXY1"/>
<dbReference type="TreeFam" id="TF328838"/>
<dbReference type="BioGRID-ORCS" id="72392">
    <property type="hits" value="4 hits in 78 CRISPR screens"/>
</dbReference>
<dbReference type="PRO" id="PR:Q9CXY1"/>
<dbReference type="Proteomes" id="UP000000589">
    <property type="component" value="Chromosome 5"/>
</dbReference>
<dbReference type="RNAct" id="Q9CXY1">
    <property type="molecule type" value="protein"/>
</dbReference>
<dbReference type="Bgee" id="ENSMUSG00000013495">
    <property type="expression patterns" value="Expressed in spermatocyte and 208 other cell types or tissues"/>
</dbReference>
<dbReference type="ExpressionAtlas" id="Q9CXY1">
    <property type="expression patterns" value="baseline and differential"/>
</dbReference>
<dbReference type="GO" id="GO:0005768">
    <property type="term" value="C:endosome"/>
    <property type="evidence" value="ECO:0000250"/>
    <property type="project" value="UniProtKB"/>
</dbReference>
<dbReference type="GO" id="GO:0010008">
    <property type="term" value="C:endosome membrane"/>
    <property type="evidence" value="ECO:0000250"/>
    <property type="project" value="UniProtKB"/>
</dbReference>
<dbReference type="GO" id="GO:0005765">
    <property type="term" value="C:lysosomal membrane"/>
    <property type="evidence" value="ECO:0000250"/>
    <property type="project" value="UniProtKB"/>
</dbReference>
<dbReference type="GO" id="GO:0005764">
    <property type="term" value="C:lysosome"/>
    <property type="evidence" value="ECO:0000250"/>
    <property type="project" value="UniProtKB"/>
</dbReference>
<dbReference type="GO" id="GO:0050544">
    <property type="term" value="F:arachidonate binding"/>
    <property type="evidence" value="ECO:0000250"/>
    <property type="project" value="UniProtKB"/>
</dbReference>
<dbReference type="GO" id="GO:0005267">
    <property type="term" value="F:potassium channel activity"/>
    <property type="evidence" value="ECO:0000250"/>
    <property type="project" value="UniProtKB"/>
</dbReference>
<dbReference type="GO" id="GO:0022841">
    <property type="term" value="F:potassium ion leak channel activity"/>
    <property type="evidence" value="ECO:0000315"/>
    <property type="project" value="UniProtKB"/>
</dbReference>
<dbReference type="GO" id="GO:0015252">
    <property type="term" value="F:proton channel activity"/>
    <property type="evidence" value="ECO:0000250"/>
    <property type="project" value="UniProtKB"/>
</dbReference>
<dbReference type="GO" id="GO:0035752">
    <property type="term" value="P:lysosomal lumen pH elevation"/>
    <property type="evidence" value="ECO:0000250"/>
    <property type="project" value="UniProtKB"/>
</dbReference>
<dbReference type="GO" id="GO:0070050">
    <property type="term" value="P:neuron cellular homeostasis"/>
    <property type="evidence" value="ECO:0000315"/>
    <property type="project" value="UniProtKB"/>
</dbReference>
<dbReference type="GO" id="GO:0090385">
    <property type="term" value="P:phagosome-lysosome fusion"/>
    <property type="evidence" value="ECO:0000315"/>
    <property type="project" value="UniProtKB"/>
</dbReference>
<dbReference type="GO" id="GO:0071805">
    <property type="term" value="P:potassium ion transmembrane transport"/>
    <property type="evidence" value="ECO:0000315"/>
    <property type="project" value="UniProtKB"/>
</dbReference>
<dbReference type="GO" id="GO:1902600">
    <property type="term" value="P:proton transmembrane transport"/>
    <property type="evidence" value="ECO:0000250"/>
    <property type="project" value="UniProtKB"/>
</dbReference>
<dbReference type="GO" id="GO:0035751">
    <property type="term" value="P:regulation of lysosomal lumen pH"/>
    <property type="evidence" value="ECO:0000315"/>
    <property type="project" value="UniProtKB"/>
</dbReference>
<dbReference type="InterPro" id="IPR010617">
    <property type="entry name" value="TMEM175-like"/>
</dbReference>
<dbReference type="PANTHER" id="PTHR31462">
    <property type="entry name" value="ENDOSOMAL/LYSOSOMAL POTASSIUM CHANNEL TMEM175"/>
    <property type="match status" value="1"/>
</dbReference>
<dbReference type="PANTHER" id="PTHR31462:SF5">
    <property type="entry name" value="ENDOSOMAL_LYSOSOMAL PROTON CHANNEL TMEM175"/>
    <property type="match status" value="1"/>
</dbReference>
<dbReference type="Pfam" id="PF06736">
    <property type="entry name" value="TMEM175"/>
    <property type="match status" value="2"/>
</dbReference>
<gene>
    <name evidence="8 10" type="primary">Tmem175</name>
</gene>
<evidence type="ECO:0000250" key="1">
    <source>
        <dbReference type="UniProtKB" id="K9UJK2"/>
    </source>
</evidence>
<evidence type="ECO:0000250" key="2">
    <source>
        <dbReference type="UniProtKB" id="Q9BSA9"/>
    </source>
</evidence>
<evidence type="ECO:0000255" key="3"/>
<evidence type="ECO:0000256" key="4">
    <source>
        <dbReference type="SAM" id="MobiDB-lite"/>
    </source>
</evidence>
<evidence type="ECO:0000269" key="5">
    <source>
    </source>
</evidence>
<evidence type="ECO:0000269" key="6">
    <source>
    </source>
</evidence>
<evidence type="ECO:0000269" key="7">
    <source>
    </source>
</evidence>
<evidence type="ECO:0000303" key="8">
    <source>
    </source>
</evidence>
<evidence type="ECO:0000305" key="9"/>
<evidence type="ECO:0000312" key="10">
    <source>
        <dbReference type="MGI" id="MGI:1919642"/>
    </source>
</evidence>
<reference key="1">
    <citation type="journal article" date="2005" name="Science">
        <title>The transcriptional landscape of the mammalian genome.</title>
        <authorList>
            <person name="Carninci P."/>
            <person name="Kasukawa T."/>
            <person name="Katayama S."/>
            <person name="Gough J."/>
            <person name="Frith M.C."/>
            <person name="Maeda N."/>
            <person name="Oyama R."/>
            <person name="Ravasi T."/>
            <person name="Lenhard B."/>
            <person name="Wells C."/>
            <person name="Kodzius R."/>
            <person name="Shimokawa K."/>
            <person name="Bajic V.B."/>
            <person name="Brenner S.E."/>
            <person name="Batalov S."/>
            <person name="Forrest A.R."/>
            <person name="Zavolan M."/>
            <person name="Davis M.J."/>
            <person name="Wilming L.G."/>
            <person name="Aidinis V."/>
            <person name="Allen J.E."/>
            <person name="Ambesi-Impiombato A."/>
            <person name="Apweiler R."/>
            <person name="Aturaliya R.N."/>
            <person name="Bailey T.L."/>
            <person name="Bansal M."/>
            <person name="Baxter L."/>
            <person name="Beisel K.W."/>
            <person name="Bersano T."/>
            <person name="Bono H."/>
            <person name="Chalk A.M."/>
            <person name="Chiu K.P."/>
            <person name="Choudhary V."/>
            <person name="Christoffels A."/>
            <person name="Clutterbuck D.R."/>
            <person name="Crowe M.L."/>
            <person name="Dalla E."/>
            <person name="Dalrymple B.P."/>
            <person name="de Bono B."/>
            <person name="Della Gatta G."/>
            <person name="di Bernardo D."/>
            <person name="Down T."/>
            <person name="Engstrom P."/>
            <person name="Fagiolini M."/>
            <person name="Faulkner G."/>
            <person name="Fletcher C.F."/>
            <person name="Fukushima T."/>
            <person name="Furuno M."/>
            <person name="Futaki S."/>
            <person name="Gariboldi M."/>
            <person name="Georgii-Hemming P."/>
            <person name="Gingeras T.R."/>
            <person name="Gojobori T."/>
            <person name="Green R.E."/>
            <person name="Gustincich S."/>
            <person name="Harbers M."/>
            <person name="Hayashi Y."/>
            <person name="Hensch T.K."/>
            <person name="Hirokawa N."/>
            <person name="Hill D."/>
            <person name="Huminiecki L."/>
            <person name="Iacono M."/>
            <person name="Ikeo K."/>
            <person name="Iwama A."/>
            <person name="Ishikawa T."/>
            <person name="Jakt M."/>
            <person name="Kanapin A."/>
            <person name="Katoh M."/>
            <person name="Kawasawa Y."/>
            <person name="Kelso J."/>
            <person name="Kitamura H."/>
            <person name="Kitano H."/>
            <person name="Kollias G."/>
            <person name="Krishnan S.P."/>
            <person name="Kruger A."/>
            <person name="Kummerfeld S.K."/>
            <person name="Kurochkin I.V."/>
            <person name="Lareau L.F."/>
            <person name="Lazarevic D."/>
            <person name="Lipovich L."/>
            <person name="Liu J."/>
            <person name="Liuni S."/>
            <person name="McWilliam S."/>
            <person name="Madan Babu M."/>
            <person name="Madera M."/>
            <person name="Marchionni L."/>
            <person name="Matsuda H."/>
            <person name="Matsuzawa S."/>
            <person name="Miki H."/>
            <person name="Mignone F."/>
            <person name="Miyake S."/>
            <person name="Morris K."/>
            <person name="Mottagui-Tabar S."/>
            <person name="Mulder N."/>
            <person name="Nakano N."/>
            <person name="Nakauchi H."/>
            <person name="Ng P."/>
            <person name="Nilsson R."/>
            <person name="Nishiguchi S."/>
            <person name="Nishikawa S."/>
            <person name="Nori F."/>
            <person name="Ohara O."/>
            <person name="Okazaki Y."/>
            <person name="Orlando V."/>
            <person name="Pang K.C."/>
            <person name="Pavan W.J."/>
            <person name="Pavesi G."/>
            <person name="Pesole G."/>
            <person name="Petrovsky N."/>
            <person name="Piazza S."/>
            <person name="Reed J."/>
            <person name="Reid J.F."/>
            <person name="Ring B.Z."/>
            <person name="Ringwald M."/>
            <person name="Rost B."/>
            <person name="Ruan Y."/>
            <person name="Salzberg S.L."/>
            <person name="Sandelin A."/>
            <person name="Schneider C."/>
            <person name="Schoenbach C."/>
            <person name="Sekiguchi K."/>
            <person name="Semple C.A."/>
            <person name="Seno S."/>
            <person name="Sessa L."/>
            <person name="Sheng Y."/>
            <person name="Shibata Y."/>
            <person name="Shimada H."/>
            <person name="Shimada K."/>
            <person name="Silva D."/>
            <person name="Sinclair B."/>
            <person name="Sperling S."/>
            <person name="Stupka E."/>
            <person name="Sugiura K."/>
            <person name="Sultana R."/>
            <person name="Takenaka Y."/>
            <person name="Taki K."/>
            <person name="Tammoja K."/>
            <person name="Tan S.L."/>
            <person name="Tang S."/>
            <person name="Taylor M.S."/>
            <person name="Tegner J."/>
            <person name="Teichmann S.A."/>
            <person name="Ueda H.R."/>
            <person name="van Nimwegen E."/>
            <person name="Verardo R."/>
            <person name="Wei C.L."/>
            <person name="Yagi K."/>
            <person name="Yamanishi H."/>
            <person name="Zabarovsky E."/>
            <person name="Zhu S."/>
            <person name="Zimmer A."/>
            <person name="Hide W."/>
            <person name="Bult C."/>
            <person name="Grimmond S.M."/>
            <person name="Teasdale R.D."/>
            <person name="Liu E.T."/>
            <person name="Brusic V."/>
            <person name="Quackenbush J."/>
            <person name="Wahlestedt C."/>
            <person name="Mattick J.S."/>
            <person name="Hume D.A."/>
            <person name="Kai C."/>
            <person name="Sasaki D."/>
            <person name="Tomaru Y."/>
            <person name="Fukuda S."/>
            <person name="Kanamori-Katayama M."/>
            <person name="Suzuki M."/>
            <person name="Aoki J."/>
            <person name="Arakawa T."/>
            <person name="Iida J."/>
            <person name="Imamura K."/>
            <person name="Itoh M."/>
            <person name="Kato T."/>
            <person name="Kawaji H."/>
            <person name="Kawagashira N."/>
            <person name="Kawashima T."/>
            <person name="Kojima M."/>
            <person name="Kondo S."/>
            <person name="Konno H."/>
            <person name="Nakano K."/>
            <person name="Ninomiya N."/>
            <person name="Nishio T."/>
            <person name="Okada M."/>
            <person name="Plessy C."/>
            <person name="Shibata K."/>
            <person name="Shiraki T."/>
            <person name="Suzuki S."/>
            <person name="Tagami M."/>
            <person name="Waki K."/>
            <person name="Watahiki A."/>
            <person name="Okamura-Oho Y."/>
            <person name="Suzuki H."/>
            <person name="Kawai J."/>
            <person name="Hayashizaki Y."/>
        </authorList>
    </citation>
    <scope>NUCLEOTIDE SEQUENCE [LARGE SCALE MRNA]</scope>
    <source>
        <strain>C57BL/6J</strain>
        <strain>NOD</strain>
        <tissue>Dendritic cell</tissue>
        <tissue>Head</tissue>
    </source>
</reference>
<reference key="2">
    <citation type="journal article" date="2004" name="Genome Res.">
        <title>The status, quality, and expansion of the NIH full-length cDNA project: the Mammalian Gene Collection (MGC).</title>
        <authorList>
            <consortium name="The MGC Project Team"/>
        </authorList>
    </citation>
    <scope>NUCLEOTIDE SEQUENCE [LARGE SCALE MRNA]</scope>
    <source>
        <strain>Czech II</strain>
        <tissue>Mammary tumor</tissue>
    </source>
</reference>
<reference key="3">
    <citation type="journal article" date="2009" name="Immunity">
        <title>The phagosomal proteome in interferon-gamma-activated macrophages.</title>
        <authorList>
            <person name="Trost M."/>
            <person name="English L."/>
            <person name="Lemieux S."/>
            <person name="Courcelles M."/>
            <person name="Desjardins M."/>
            <person name="Thibault P."/>
        </authorList>
    </citation>
    <scope>IDENTIFICATION BY MASS SPECTROMETRY [LARGE SCALE ANALYSIS]</scope>
</reference>
<reference key="4">
    <citation type="journal article" date="2015" name="Cell">
        <title>TMEM175 is an organelle K(+) channel regulating lysosomal function.</title>
        <authorList>
            <person name="Cang C."/>
            <person name="Aranda K."/>
            <person name="Seo Y.J."/>
            <person name="Gasnier B."/>
            <person name="Ren D."/>
        </authorList>
    </citation>
    <scope>FUNCTION</scope>
    <scope>TRANSPORTER ACTIVITY</scope>
</reference>
<reference key="5">
    <citation type="journal article" date="2021" name="Nature">
        <title>A growth-factor-activated lysosomal K+ channel regulates Parkinson's pathology.</title>
        <authorList>
            <person name="Wie J."/>
            <person name="Liu Z."/>
            <person name="Song H."/>
            <person name="Tropea T.F."/>
            <person name="Yang L."/>
            <person name="Wang H."/>
            <person name="Liang Y."/>
            <person name="Cang C."/>
            <person name="Aranda K."/>
            <person name="Lohmann J."/>
            <person name="Yang J."/>
            <person name="Lu B."/>
            <person name="Chen-Plotkin A.S."/>
            <person name="Luk K.C."/>
            <person name="Ren D."/>
        </authorList>
    </citation>
    <scope>FUNCTION</scope>
    <scope>ACTIVITY REGULATION</scope>
    <scope>IDENTIFICATION IN THE LYSOK(GF) COMPLEX</scope>
    <scope>DISRUPTION PHENOTYPE</scope>
    <scope>MUTAGENESIS OF GLN-62 AND ILE-390</scope>
</reference>
<reference key="6">
    <citation type="journal article" date="2022" name="Cell">
        <title>Parkinson's disease-risk protein TMEM175 is a proton-activated proton channel in lysosomes.</title>
        <authorList>
            <person name="Hu M."/>
            <person name="Li P."/>
            <person name="Wang C."/>
            <person name="Feng X."/>
            <person name="Geng Q."/>
            <person name="Chen W."/>
            <person name="Marthi M."/>
            <person name="Zhang W."/>
            <person name="Gao C."/>
            <person name="Reid W."/>
            <person name="Swanson J."/>
            <person name="Du W."/>
            <person name="Hume R.I."/>
            <person name="Xu H."/>
        </authorList>
    </citation>
    <scope>FUNCTION</scope>
    <scope>DISRUPTION PHENOTYPE</scope>
</reference>
<protein>
    <recommendedName>
        <fullName evidence="9">Endosomal/lysosomal proton channel TMEM175</fullName>
    </recommendedName>
    <alternativeName>
        <fullName evidence="9">Potassium channel TMEM175</fullName>
    </alternativeName>
    <alternativeName>
        <fullName evidence="8">Transmembrane protein 175</fullName>
        <shortName evidence="8">mTMEM175</shortName>
    </alternativeName>
</protein>
<name>TM175_MOUSE</name>
<organism>
    <name type="scientific">Mus musculus</name>
    <name type="common">Mouse</name>
    <dbReference type="NCBI Taxonomy" id="10090"/>
    <lineage>
        <taxon>Eukaryota</taxon>
        <taxon>Metazoa</taxon>
        <taxon>Chordata</taxon>
        <taxon>Craniata</taxon>
        <taxon>Vertebrata</taxon>
        <taxon>Euteleostomi</taxon>
        <taxon>Mammalia</taxon>
        <taxon>Eutheria</taxon>
        <taxon>Euarchontoglires</taxon>
        <taxon>Glires</taxon>
        <taxon>Rodentia</taxon>
        <taxon>Myomorpha</taxon>
        <taxon>Muroidea</taxon>
        <taxon>Muridae</taxon>
        <taxon>Murinae</taxon>
        <taxon>Mus</taxon>
        <taxon>Mus</taxon>
    </lineage>
</organism>
<feature type="chain" id="PRO_0000282589" description="Endosomal/lysosomal proton channel TMEM175">
    <location>
        <begin position="1"/>
        <end position="499"/>
    </location>
</feature>
<feature type="topological domain" description="Cytoplasmic" evidence="2">
    <location>
        <begin position="1"/>
        <end position="30"/>
    </location>
</feature>
<feature type="transmembrane region" description="Helical; Name=TM1-1" evidence="2">
    <location>
        <begin position="31"/>
        <end position="53"/>
    </location>
</feature>
<feature type="topological domain" description="Lumenal" evidence="2">
    <location>
        <begin position="54"/>
        <end position="74"/>
    </location>
</feature>
<feature type="transmembrane region" description="Helical; Name=TM2-1" evidence="2">
    <location>
        <begin position="75"/>
        <end position="97"/>
    </location>
</feature>
<feature type="topological domain" description="Cytoplasmic" evidence="2">
    <location>
        <begin position="98"/>
        <end position="103"/>
    </location>
</feature>
<feature type="transmembrane region" description="Helical; Name=TM3-1" evidence="2">
    <location>
        <begin position="104"/>
        <end position="125"/>
    </location>
</feature>
<feature type="topological domain" description="Lumenal" evidence="2">
    <location>
        <begin position="126"/>
        <end position="135"/>
    </location>
</feature>
<feature type="transmembrane region" description="Helical; Name=TM4-1" evidence="2">
    <location>
        <begin position="136"/>
        <end position="157"/>
    </location>
</feature>
<feature type="topological domain" description="Cytoplasmic" evidence="2">
    <location>
        <begin position="158"/>
        <end position="181"/>
    </location>
</feature>
<feature type="transmembrane region" description="Helical; Name=TM5-1" evidence="3">
    <location>
        <begin position="182"/>
        <end position="202"/>
    </location>
</feature>
<feature type="topological domain" description="Lumenal" evidence="2">
    <location>
        <begin position="203"/>
        <end position="207"/>
    </location>
</feature>
<feature type="transmembrane region" description="Helical; Name=TM6-1" evidence="3">
    <location>
        <begin position="208"/>
        <end position="227"/>
    </location>
</feature>
<feature type="topological domain" description="Cytoplasmic" evidence="2">
    <location>
        <begin position="228"/>
        <end position="254"/>
    </location>
</feature>
<feature type="transmembrane region" description="Helical; Name=TM1-2" evidence="2">
    <location>
        <begin position="255"/>
        <end position="279"/>
    </location>
</feature>
<feature type="topological domain" description="Lumenal" evidence="2">
    <location>
        <begin position="280"/>
        <end position="306"/>
    </location>
</feature>
<feature type="transmembrane region" description="Helical; Name=TM2-2" evidence="2">
    <location>
        <begin position="307"/>
        <end position="329"/>
    </location>
</feature>
<feature type="topological domain" description="Cytoplasmic" evidence="2">
    <location>
        <begin position="330"/>
        <end position="335"/>
    </location>
</feature>
<feature type="transmembrane region" description="Helical; Name=TM3-2" evidence="2">
    <location>
        <begin position="336"/>
        <end position="357"/>
    </location>
</feature>
<feature type="topological domain" description="Lumenal" evidence="2">
    <location>
        <begin position="358"/>
        <end position="372"/>
    </location>
</feature>
<feature type="transmembrane region" description="Helical; Name=TM4-2" evidence="2">
    <location>
        <begin position="373"/>
        <end position="393"/>
    </location>
</feature>
<feature type="topological domain" description="Cytoplasmic" evidence="2">
    <location>
        <begin position="394"/>
        <end position="413"/>
    </location>
</feature>
<feature type="transmembrane region" description="Helical; Name=TM5-2" evidence="2">
    <location>
        <begin position="414"/>
        <end position="437"/>
    </location>
</feature>
<feature type="topological domain" description="Lumenal" evidence="2">
    <location>
        <begin position="438"/>
        <end position="439"/>
    </location>
</feature>
<feature type="transmembrane region" description="Helical; Name=TM6-2" evidence="2">
    <location>
        <begin position="440"/>
        <end position="466"/>
    </location>
</feature>
<feature type="topological domain" description="Cytoplasmic" evidence="2">
    <location>
        <begin position="467"/>
        <end position="499"/>
    </location>
</feature>
<feature type="region of interest" description="Disordered" evidence="4">
    <location>
        <begin position="1"/>
        <end position="30"/>
    </location>
</feature>
<feature type="region of interest" description="Short helix H1-1" evidence="1">
    <location>
        <begin position="55"/>
        <end position="60"/>
    </location>
</feature>
<feature type="region of interest" description="Short helix H2-1" evidence="1">
    <location>
        <begin position="62"/>
        <end position="68"/>
    </location>
</feature>
<feature type="region of interest" description="Short helix H1-2" evidence="1">
    <location>
        <begin position="285"/>
        <end position="293"/>
    </location>
</feature>
<feature type="region of interest" description="Short helix H2-2" evidence="1">
    <location>
        <begin position="295"/>
        <end position="301"/>
    </location>
</feature>
<feature type="short sequence motif" description="RxxxFSD motif 1" evidence="2">
    <location>
        <begin position="32"/>
        <end position="38"/>
    </location>
</feature>
<feature type="short sequence motif" description="RxxxFSD motif 2" evidence="2">
    <location>
        <begin position="257"/>
        <end position="263"/>
    </location>
</feature>
<feature type="site" description="Hydrophobic filter residue 1-1" evidence="2">
    <location>
        <position position="43"/>
    </location>
</feature>
<feature type="site" description="Hydrophobic filter residue 2-1" evidence="1">
    <location>
        <position position="47"/>
    </location>
</feature>
<feature type="site" description="Hydrophobic filter residue 3-1" evidence="1">
    <location>
        <position position="50"/>
    </location>
</feature>
<feature type="site" description="Hydrophobic filter residue 1-2" evidence="2">
    <location>
        <position position="268"/>
    </location>
</feature>
<feature type="site" description="Hydrophobic filter residue 2-2" evidence="1">
    <location>
        <position position="272"/>
    </location>
</feature>
<feature type="site" description="Hydrophobic filter residue 3-2" evidence="1">
    <location>
        <position position="275"/>
    </location>
</feature>
<feature type="modified residue" description="Phosphothreonine" evidence="2">
    <location>
        <position position="6"/>
    </location>
</feature>
<feature type="mutagenesis site" description="Gain-of-function mutant; increased potassium channel activity in knockin mice." evidence="6">
    <original>Q</original>
    <variation>P</variation>
    <location>
        <position position="62"/>
    </location>
</feature>
<feature type="mutagenesis site" description="Reduced potassium channel activity in knockin mice." evidence="6">
    <original>I</original>
    <variation>T</variation>
    <location>
        <position position="390"/>
    </location>
</feature>
<feature type="sequence conflict" description="In Ref. 2; AAH05542." evidence="9" ref="2">
    <original>H</original>
    <variation>R</variation>
    <location>
        <position position="174"/>
    </location>
</feature>
<feature type="sequence conflict" description="In Ref. 1; BAE41678." evidence="9" ref="1">
    <original>A</original>
    <variation>S</variation>
    <location>
        <position position="197"/>
    </location>
</feature>
<feature type="sequence conflict" description="In Ref. 1; BAE41678." evidence="9" ref="1">
    <original>H</original>
    <variation>R</variation>
    <location>
        <position position="324"/>
    </location>
</feature>
<feature type="sequence conflict" description="In Ref. 1; BAB29031." evidence="9" ref="1">
    <original>G</original>
    <variation>R</variation>
    <location>
        <position position="475"/>
    </location>
</feature>
<keyword id="KW-0967">Endosome</keyword>
<keyword id="KW-0407">Ion channel</keyword>
<keyword id="KW-0406">Ion transport</keyword>
<keyword id="KW-0458">Lysosome</keyword>
<keyword id="KW-0472">Membrane</keyword>
<keyword id="KW-0597">Phosphoprotein</keyword>
<keyword id="KW-0630">Potassium</keyword>
<keyword id="KW-0631">Potassium channel</keyword>
<keyword id="KW-0633">Potassium transport</keyword>
<keyword id="KW-1185">Reference proteome</keyword>
<keyword id="KW-0812">Transmembrane</keyword>
<keyword id="KW-1133">Transmembrane helix</keyword>
<keyword id="KW-0813">Transport</keyword>
<accession>Q9CXY1</accession>
<accession>Q3TDC4</accession>
<accession>Q99K00</accession>
<proteinExistence type="evidence at protein level"/>
<sequence length="499" mass="55578">MSRLQTEEQAVDSEGDSSLHRRNEEGTQSSHRMLGFSDALLSIIATVMILPVTHTEISPEQQFDKSIQKLLATRIAVYLMTFLIVTVAWTAHTRLFQVVGKIDDTLALLNLACMMTITLLPYTFSLMVTFPDVPLGIFLFCVCVIAIGSVQAMIVGYAFHFPHLLNPQIQCSTHRDLSRRHILHLVLRGPALCFVAAVFSLFFFPLSYLLMVTVIFLPHISKATTWCKDKLMGQRESPAHDMEPFSIDLHAPLSKERVEAFSDGVYAIVATLLILDICEDNVPDPKDVQEKFSGSLVAALGAYGPQFLAYFGSFATVGLLWFAHHSLFLHVRKATQTMGLLNILSLAFVGGLPLAYQQTSAFARQPHDELERVRVSCAIIFFASIFQFAIWTTALLHQTETLQPAVQFGGQEHAFMFAKLALYPCASLLAFAATCLLSRFSTAIFHLMQISVPFAFLLLRLLVRLALAGLQVLRGLWPHHPQQDQSEPEAQSQLLPDPC</sequence>